<keyword id="KW-0963">Cytoplasm</keyword>
<keyword id="KW-0456">Lyase</keyword>
<keyword id="KW-0670">Pyruvate</keyword>
<keyword id="KW-1185">Reference proteome</keyword>
<keyword id="KW-0831">Ubiquinone biosynthesis</keyword>
<name>UBIC_CUPMC</name>
<protein>
    <recommendedName>
        <fullName evidence="1">Probable chorismate pyruvate-lyase</fullName>
        <shortName evidence="1">CL</shortName>
        <shortName evidence="1">CPL</shortName>
        <ecNumber evidence="1">4.1.3.40</ecNumber>
    </recommendedName>
</protein>
<proteinExistence type="inferred from homology"/>
<sequence>MQKLRAAWHAHLPYDASIPLNQRRWITGEGSLTARLMSASAAFRVRRLAQAPQLPLADEWRALGLIRPLPAITREVLLICDETPAVFAHTIVDPRYARRDWPFLRGLGNRPLGGALFVDPRVRRDPFQFARLTPCHPLRQALQRVLPALSSEPMLPARRSVFRRGGGAMLVTEVFLPDLLTRAAPENTGAGGTRLPRRIDTHHTPSKQEERPES</sequence>
<comment type="function">
    <text evidence="1">Removes the pyruvyl group from chorismate, with concomitant aromatization of the ring, to provide 4-hydroxybenzoate (4HB) for the ubiquinone pathway.</text>
</comment>
<comment type="catalytic activity">
    <reaction evidence="1">
        <text>chorismate = 4-hydroxybenzoate + pyruvate</text>
        <dbReference type="Rhea" id="RHEA:16505"/>
        <dbReference type="ChEBI" id="CHEBI:15361"/>
        <dbReference type="ChEBI" id="CHEBI:17879"/>
        <dbReference type="ChEBI" id="CHEBI:29748"/>
        <dbReference type="EC" id="4.1.3.40"/>
    </reaction>
</comment>
<comment type="pathway">
    <text evidence="1">Cofactor biosynthesis; ubiquinone biosynthesis.</text>
</comment>
<comment type="subcellular location">
    <subcellularLocation>
        <location evidence="1">Cytoplasm</location>
    </subcellularLocation>
</comment>
<comment type="similarity">
    <text evidence="1">Belongs to the UbiC family.</text>
</comment>
<comment type="sequence caution" evidence="3">
    <conflict type="erroneous initiation">
        <sequence resource="EMBL-CDS" id="ABF09930"/>
    </conflict>
    <text>Extended N-terminus.</text>
</comment>
<gene>
    <name evidence="1" type="primary">ubiC</name>
    <name type="ordered locus">Rmet_3058</name>
</gene>
<reference key="1">
    <citation type="journal article" date="2010" name="PLoS ONE">
        <title>The complete genome sequence of Cupriavidus metallidurans strain CH34, a master survivalist in harsh and anthropogenic environments.</title>
        <authorList>
            <person name="Janssen P.J."/>
            <person name="Van Houdt R."/>
            <person name="Moors H."/>
            <person name="Monsieurs P."/>
            <person name="Morin N."/>
            <person name="Michaux A."/>
            <person name="Benotmane M.A."/>
            <person name="Leys N."/>
            <person name="Vallaeys T."/>
            <person name="Lapidus A."/>
            <person name="Monchy S."/>
            <person name="Medigue C."/>
            <person name="Taghavi S."/>
            <person name="McCorkle S."/>
            <person name="Dunn J."/>
            <person name="van der Lelie D."/>
            <person name="Mergeay M."/>
        </authorList>
    </citation>
    <scope>NUCLEOTIDE SEQUENCE [LARGE SCALE GENOMIC DNA]</scope>
    <source>
        <strain>ATCC 43123 / DSM 2839 / NBRC 102507 / CH34</strain>
    </source>
</reference>
<organism>
    <name type="scientific">Cupriavidus metallidurans (strain ATCC 43123 / DSM 2839 / NBRC 102507 / CH34)</name>
    <name type="common">Ralstonia metallidurans</name>
    <dbReference type="NCBI Taxonomy" id="266264"/>
    <lineage>
        <taxon>Bacteria</taxon>
        <taxon>Pseudomonadati</taxon>
        <taxon>Pseudomonadota</taxon>
        <taxon>Betaproteobacteria</taxon>
        <taxon>Burkholderiales</taxon>
        <taxon>Burkholderiaceae</taxon>
        <taxon>Cupriavidus</taxon>
    </lineage>
</organism>
<evidence type="ECO:0000255" key="1">
    <source>
        <dbReference type="HAMAP-Rule" id="MF_01632"/>
    </source>
</evidence>
<evidence type="ECO:0000256" key="2">
    <source>
        <dbReference type="SAM" id="MobiDB-lite"/>
    </source>
</evidence>
<evidence type="ECO:0000305" key="3"/>
<dbReference type="EC" id="4.1.3.40" evidence="1"/>
<dbReference type="EMBL" id="CP000352">
    <property type="protein sequence ID" value="ABF09930.1"/>
    <property type="status" value="ALT_INIT"/>
    <property type="molecule type" value="Genomic_DNA"/>
</dbReference>
<dbReference type="RefSeq" id="WP_029307163.1">
    <property type="nucleotide sequence ID" value="NC_007973.1"/>
</dbReference>
<dbReference type="SMR" id="Q1LIU6"/>
<dbReference type="STRING" id="266264.Rmet_3058"/>
<dbReference type="KEGG" id="rme:Rmet_3058"/>
<dbReference type="eggNOG" id="COG3161">
    <property type="taxonomic scope" value="Bacteria"/>
</dbReference>
<dbReference type="HOGENOM" id="CLU_096824_2_0_4"/>
<dbReference type="UniPathway" id="UPA00232"/>
<dbReference type="Proteomes" id="UP000002429">
    <property type="component" value="Chromosome"/>
</dbReference>
<dbReference type="GO" id="GO:0005829">
    <property type="term" value="C:cytosol"/>
    <property type="evidence" value="ECO:0007669"/>
    <property type="project" value="TreeGrafter"/>
</dbReference>
<dbReference type="GO" id="GO:0008813">
    <property type="term" value="F:chorismate lyase activity"/>
    <property type="evidence" value="ECO:0007669"/>
    <property type="project" value="UniProtKB-UniRule"/>
</dbReference>
<dbReference type="GO" id="GO:0042866">
    <property type="term" value="P:pyruvate biosynthetic process"/>
    <property type="evidence" value="ECO:0007669"/>
    <property type="project" value="UniProtKB-UniRule"/>
</dbReference>
<dbReference type="GO" id="GO:0006744">
    <property type="term" value="P:ubiquinone biosynthetic process"/>
    <property type="evidence" value="ECO:0007669"/>
    <property type="project" value="UniProtKB-UniRule"/>
</dbReference>
<dbReference type="Gene3D" id="3.40.1410.10">
    <property type="entry name" value="Chorismate lyase-like"/>
    <property type="match status" value="1"/>
</dbReference>
<dbReference type="HAMAP" id="MF_01632">
    <property type="entry name" value="UbiC"/>
    <property type="match status" value="1"/>
</dbReference>
<dbReference type="InterPro" id="IPR007440">
    <property type="entry name" value="Chorismate--pyruvate_lyase"/>
</dbReference>
<dbReference type="InterPro" id="IPR028978">
    <property type="entry name" value="Chorismate_lyase_/UTRA_dom_sf"/>
</dbReference>
<dbReference type="PANTHER" id="PTHR38683">
    <property type="entry name" value="CHORISMATE PYRUVATE-LYASE"/>
    <property type="match status" value="1"/>
</dbReference>
<dbReference type="PANTHER" id="PTHR38683:SF1">
    <property type="entry name" value="CHORISMATE PYRUVATE-LYASE"/>
    <property type="match status" value="1"/>
</dbReference>
<dbReference type="Pfam" id="PF04345">
    <property type="entry name" value="Chor_lyase"/>
    <property type="match status" value="1"/>
</dbReference>
<dbReference type="SUPFAM" id="SSF64288">
    <property type="entry name" value="Chorismate lyase-like"/>
    <property type="match status" value="1"/>
</dbReference>
<accession>Q1LIU6</accession>
<feature type="chain" id="PRO_0000255911" description="Probable chorismate pyruvate-lyase">
    <location>
        <begin position="1"/>
        <end position="214"/>
    </location>
</feature>
<feature type="region of interest" description="Disordered" evidence="2">
    <location>
        <begin position="183"/>
        <end position="214"/>
    </location>
</feature>
<feature type="compositionally biased region" description="Basic and acidic residues" evidence="2">
    <location>
        <begin position="197"/>
        <end position="214"/>
    </location>
</feature>
<feature type="binding site" evidence="1">
    <location>
        <position position="74"/>
    </location>
    <ligand>
        <name>substrate</name>
    </ligand>
</feature>
<feature type="binding site" evidence="1">
    <location>
        <position position="112"/>
    </location>
    <ligand>
        <name>substrate</name>
    </ligand>
</feature>
<feature type="binding site" evidence="1">
    <location>
        <position position="173"/>
    </location>
    <ligand>
        <name>substrate</name>
    </ligand>
</feature>